<protein>
    <recommendedName>
        <fullName evidence="1">Phenylalanine--tRNA ligase alpha subunit</fullName>
        <ecNumber evidence="1">6.1.1.20</ecNumber>
    </recommendedName>
    <alternativeName>
        <fullName evidence="1">Phenylalanyl-tRNA synthetase alpha subunit</fullName>
        <shortName evidence="1">PheRS</shortName>
    </alternativeName>
</protein>
<comment type="catalytic activity">
    <reaction evidence="1">
        <text>tRNA(Phe) + L-phenylalanine + ATP = L-phenylalanyl-tRNA(Phe) + AMP + diphosphate + H(+)</text>
        <dbReference type="Rhea" id="RHEA:19413"/>
        <dbReference type="Rhea" id="RHEA-COMP:9668"/>
        <dbReference type="Rhea" id="RHEA-COMP:9699"/>
        <dbReference type="ChEBI" id="CHEBI:15378"/>
        <dbReference type="ChEBI" id="CHEBI:30616"/>
        <dbReference type="ChEBI" id="CHEBI:33019"/>
        <dbReference type="ChEBI" id="CHEBI:58095"/>
        <dbReference type="ChEBI" id="CHEBI:78442"/>
        <dbReference type="ChEBI" id="CHEBI:78531"/>
        <dbReference type="ChEBI" id="CHEBI:456215"/>
        <dbReference type="EC" id="6.1.1.20"/>
    </reaction>
</comment>
<comment type="cofactor">
    <cofactor evidence="1">
        <name>Mg(2+)</name>
        <dbReference type="ChEBI" id="CHEBI:18420"/>
    </cofactor>
    <text evidence="1">Binds 2 magnesium ions per tetramer.</text>
</comment>
<comment type="subunit">
    <text evidence="1">Tetramer of two alpha and two beta subunits.</text>
</comment>
<comment type="subcellular location">
    <subcellularLocation>
        <location evidence="1">Cytoplasm</location>
    </subcellularLocation>
</comment>
<comment type="similarity">
    <text evidence="1">Belongs to the class-II aminoacyl-tRNA synthetase family. Phe-tRNA synthetase alpha subunit type 1 subfamily.</text>
</comment>
<feature type="chain" id="PRO_1000006821" description="Phenylalanine--tRNA ligase alpha subunit">
    <location>
        <begin position="1"/>
        <end position="344"/>
    </location>
</feature>
<feature type="binding site" evidence="1">
    <location>
        <position position="255"/>
    </location>
    <ligand>
        <name>Mg(2+)</name>
        <dbReference type="ChEBI" id="CHEBI:18420"/>
        <note>shared with beta subunit</note>
    </ligand>
</feature>
<accession>Q11Q26</accession>
<dbReference type="EC" id="6.1.1.20" evidence="1"/>
<dbReference type="EMBL" id="CP000383">
    <property type="protein sequence ID" value="ABG60487.1"/>
    <property type="molecule type" value="Genomic_DNA"/>
</dbReference>
<dbReference type="RefSeq" id="WP_011586597.1">
    <property type="nucleotide sequence ID" value="NC_008255.1"/>
</dbReference>
<dbReference type="SMR" id="Q11Q26"/>
<dbReference type="STRING" id="269798.CHU_3247"/>
<dbReference type="KEGG" id="chu:CHU_3247"/>
<dbReference type="eggNOG" id="COG0016">
    <property type="taxonomic scope" value="Bacteria"/>
</dbReference>
<dbReference type="HOGENOM" id="CLU_025086_0_1_10"/>
<dbReference type="OrthoDB" id="9800719at2"/>
<dbReference type="Proteomes" id="UP000001822">
    <property type="component" value="Chromosome"/>
</dbReference>
<dbReference type="GO" id="GO:0005737">
    <property type="term" value="C:cytoplasm"/>
    <property type="evidence" value="ECO:0007669"/>
    <property type="project" value="UniProtKB-SubCell"/>
</dbReference>
<dbReference type="GO" id="GO:0005524">
    <property type="term" value="F:ATP binding"/>
    <property type="evidence" value="ECO:0007669"/>
    <property type="project" value="UniProtKB-UniRule"/>
</dbReference>
<dbReference type="GO" id="GO:0000287">
    <property type="term" value="F:magnesium ion binding"/>
    <property type="evidence" value="ECO:0007669"/>
    <property type="project" value="UniProtKB-UniRule"/>
</dbReference>
<dbReference type="GO" id="GO:0004826">
    <property type="term" value="F:phenylalanine-tRNA ligase activity"/>
    <property type="evidence" value="ECO:0007669"/>
    <property type="project" value="UniProtKB-UniRule"/>
</dbReference>
<dbReference type="GO" id="GO:0000049">
    <property type="term" value="F:tRNA binding"/>
    <property type="evidence" value="ECO:0007669"/>
    <property type="project" value="InterPro"/>
</dbReference>
<dbReference type="GO" id="GO:0006432">
    <property type="term" value="P:phenylalanyl-tRNA aminoacylation"/>
    <property type="evidence" value="ECO:0007669"/>
    <property type="project" value="UniProtKB-UniRule"/>
</dbReference>
<dbReference type="CDD" id="cd00496">
    <property type="entry name" value="PheRS_alpha_core"/>
    <property type="match status" value="1"/>
</dbReference>
<dbReference type="FunFam" id="3.30.930.10:FF:000003">
    <property type="entry name" value="Phenylalanine--tRNA ligase alpha subunit"/>
    <property type="match status" value="1"/>
</dbReference>
<dbReference type="Gene3D" id="3.30.930.10">
    <property type="entry name" value="Bira Bifunctional Protein, Domain 2"/>
    <property type="match status" value="1"/>
</dbReference>
<dbReference type="HAMAP" id="MF_00281">
    <property type="entry name" value="Phe_tRNA_synth_alpha1"/>
    <property type="match status" value="1"/>
</dbReference>
<dbReference type="InterPro" id="IPR006195">
    <property type="entry name" value="aa-tRNA-synth_II"/>
</dbReference>
<dbReference type="InterPro" id="IPR045864">
    <property type="entry name" value="aa-tRNA-synth_II/BPL/LPL"/>
</dbReference>
<dbReference type="InterPro" id="IPR004529">
    <property type="entry name" value="Phe-tRNA-synth_IIc_asu"/>
</dbReference>
<dbReference type="InterPro" id="IPR004188">
    <property type="entry name" value="Phe-tRNA_ligase_II_N"/>
</dbReference>
<dbReference type="InterPro" id="IPR022911">
    <property type="entry name" value="Phe_tRNA_ligase_alpha1_bac"/>
</dbReference>
<dbReference type="InterPro" id="IPR002319">
    <property type="entry name" value="Phenylalanyl-tRNA_Synthase"/>
</dbReference>
<dbReference type="InterPro" id="IPR010978">
    <property type="entry name" value="tRNA-bd_arm"/>
</dbReference>
<dbReference type="NCBIfam" id="TIGR00468">
    <property type="entry name" value="pheS"/>
    <property type="match status" value="1"/>
</dbReference>
<dbReference type="PANTHER" id="PTHR11538:SF41">
    <property type="entry name" value="PHENYLALANINE--TRNA LIGASE, MITOCHONDRIAL"/>
    <property type="match status" value="1"/>
</dbReference>
<dbReference type="PANTHER" id="PTHR11538">
    <property type="entry name" value="PHENYLALANYL-TRNA SYNTHETASE"/>
    <property type="match status" value="1"/>
</dbReference>
<dbReference type="Pfam" id="PF02912">
    <property type="entry name" value="Phe_tRNA-synt_N"/>
    <property type="match status" value="1"/>
</dbReference>
<dbReference type="Pfam" id="PF01409">
    <property type="entry name" value="tRNA-synt_2d"/>
    <property type="match status" value="1"/>
</dbReference>
<dbReference type="SUPFAM" id="SSF55681">
    <property type="entry name" value="Class II aaRS and biotin synthetases"/>
    <property type="match status" value="1"/>
</dbReference>
<dbReference type="SUPFAM" id="SSF46589">
    <property type="entry name" value="tRNA-binding arm"/>
    <property type="match status" value="1"/>
</dbReference>
<dbReference type="PROSITE" id="PS50862">
    <property type="entry name" value="AA_TRNA_LIGASE_II"/>
    <property type="match status" value="1"/>
</dbReference>
<evidence type="ECO:0000255" key="1">
    <source>
        <dbReference type="HAMAP-Rule" id="MF_00281"/>
    </source>
</evidence>
<reference key="1">
    <citation type="journal article" date="2007" name="Appl. Environ. Microbiol.">
        <title>Genome sequence of the cellulolytic gliding bacterium Cytophaga hutchinsonii.</title>
        <authorList>
            <person name="Xie G."/>
            <person name="Bruce D.C."/>
            <person name="Challacombe J.F."/>
            <person name="Chertkov O."/>
            <person name="Detter J.C."/>
            <person name="Gilna P."/>
            <person name="Han C.S."/>
            <person name="Lucas S."/>
            <person name="Misra M."/>
            <person name="Myers G.L."/>
            <person name="Richardson P."/>
            <person name="Tapia R."/>
            <person name="Thayer N."/>
            <person name="Thompson L.S."/>
            <person name="Brettin T.S."/>
            <person name="Henrissat B."/>
            <person name="Wilson D.B."/>
            <person name="McBride M.J."/>
        </authorList>
    </citation>
    <scope>NUCLEOTIDE SEQUENCE [LARGE SCALE GENOMIC DNA]</scope>
    <source>
        <strain>ATCC 33406 / DSM 1761 / JCM 20678 / CIP 103989 / IAM 12607 / NBRC 15051 / NCIMB 9469 / D465</strain>
    </source>
</reference>
<gene>
    <name evidence="1" type="primary">pheS</name>
    <name type="ordered locus">CHU_3247</name>
</gene>
<organism>
    <name type="scientific">Cytophaga hutchinsonii (strain ATCC 33406 / DSM 1761 / CIP 103989 / NBRC 15051 / NCIMB 9469 / D465)</name>
    <dbReference type="NCBI Taxonomy" id="269798"/>
    <lineage>
        <taxon>Bacteria</taxon>
        <taxon>Pseudomonadati</taxon>
        <taxon>Bacteroidota</taxon>
        <taxon>Cytophagia</taxon>
        <taxon>Cytophagales</taxon>
        <taxon>Cytophagaceae</taxon>
        <taxon>Cytophaga</taxon>
    </lineage>
</organism>
<proteinExistence type="inferred from homology"/>
<sequence length="344" mass="39718">MLDKIKELTQTIEDFSIESKEQLEQFRLEYLSKKGKITSMFDGFDFKTVAPEIKKSMGQEMNKLKVLAQTKFEELQDKLNTGSNDNSVYQKIDTSLPVIPNELGGRHPINIVREQIYTVFERMGFNLSDGPEIEDDFHNFTALNFPENHPAREMQDTFFIERNPDIVLRTHTSSVQVRVMENQKPPIRTISPGRVYRNEAISARAHCMFHQIEGLYVDKNVSFADLKNTLYHFSKEMFGKDTQIRFRPSFFPFTEPSAEMDISCFICNGKGCNICKQSGWVEIGGAGMLDPNVLINAKIDPKVYSGFAFGMGIERITMLKYQIKDLRLFTENDVRFLRQFKHAE</sequence>
<keyword id="KW-0030">Aminoacyl-tRNA synthetase</keyword>
<keyword id="KW-0067">ATP-binding</keyword>
<keyword id="KW-0963">Cytoplasm</keyword>
<keyword id="KW-0436">Ligase</keyword>
<keyword id="KW-0460">Magnesium</keyword>
<keyword id="KW-0479">Metal-binding</keyword>
<keyword id="KW-0547">Nucleotide-binding</keyword>
<keyword id="KW-0648">Protein biosynthesis</keyword>
<keyword id="KW-1185">Reference proteome</keyword>
<name>SYFA_CYTH3</name>